<gene>
    <name type="ordered locus">lin2035</name>
</gene>
<name>Y2035_LISIN</name>
<protein>
    <recommendedName>
        <fullName evidence="1">UPF0302 protein lin2035</fullName>
    </recommendedName>
</protein>
<comment type="similarity">
    <text evidence="1">Belongs to the UPF0302 family.</text>
</comment>
<dbReference type="EMBL" id="AL596170">
    <property type="protein sequence ID" value="CAC97265.1"/>
    <property type="molecule type" value="Genomic_DNA"/>
</dbReference>
<dbReference type="PIR" id="AI1686">
    <property type="entry name" value="AI1686"/>
</dbReference>
<dbReference type="RefSeq" id="WP_003763111.1">
    <property type="nucleotide sequence ID" value="NC_003212.1"/>
</dbReference>
<dbReference type="SMR" id="Q92A87"/>
<dbReference type="STRING" id="272626.gene:17566393"/>
<dbReference type="KEGG" id="lin:lin2035"/>
<dbReference type="eggNOG" id="COG5582">
    <property type="taxonomic scope" value="Bacteria"/>
</dbReference>
<dbReference type="HOGENOM" id="CLU_126019_0_0_9"/>
<dbReference type="OrthoDB" id="2155814at2"/>
<dbReference type="Proteomes" id="UP000002513">
    <property type="component" value="Chromosome"/>
</dbReference>
<dbReference type="Gene3D" id="3.40.1530.30">
    <property type="entry name" value="Uncharacterised family UPF0302, N-terminal domain"/>
    <property type="match status" value="1"/>
</dbReference>
<dbReference type="Gene3D" id="4.10.810.10">
    <property type="entry name" value="Virus Scaffolding Protein, Chain A"/>
    <property type="match status" value="1"/>
</dbReference>
<dbReference type="HAMAP" id="MF_00760">
    <property type="entry name" value="UPF0302"/>
    <property type="match status" value="1"/>
</dbReference>
<dbReference type="InterPro" id="IPR014957">
    <property type="entry name" value="IDEAL_dom"/>
</dbReference>
<dbReference type="InterPro" id="IPR011188">
    <property type="entry name" value="UPF0302"/>
</dbReference>
<dbReference type="InterPro" id="IPR014963">
    <property type="entry name" value="UPF0302_N"/>
</dbReference>
<dbReference type="InterPro" id="IPR038091">
    <property type="entry name" value="UPF0302_N_sf"/>
</dbReference>
<dbReference type="InterPro" id="IPR027393">
    <property type="entry name" value="Virus_scaffolding_prot_C"/>
</dbReference>
<dbReference type="NCBIfam" id="NF002965">
    <property type="entry name" value="PRK03636.1"/>
    <property type="match status" value="1"/>
</dbReference>
<dbReference type="Pfam" id="PF08858">
    <property type="entry name" value="IDEAL"/>
    <property type="match status" value="1"/>
</dbReference>
<dbReference type="Pfam" id="PF08864">
    <property type="entry name" value="UPF0302"/>
    <property type="match status" value="1"/>
</dbReference>
<dbReference type="PIRSF" id="PIRSF007165">
    <property type="entry name" value="UCP007165"/>
    <property type="match status" value="1"/>
</dbReference>
<dbReference type="SMART" id="SM00914">
    <property type="entry name" value="IDEAL"/>
    <property type="match status" value="1"/>
</dbReference>
<evidence type="ECO:0000255" key="1">
    <source>
        <dbReference type="HAMAP-Rule" id="MF_00760"/>
    </source>
</evidence>
<accession>Q92A87</accession>
<organism>
    <name type="scientific">Listeria innocua serovar 6a (strain ATCC BAA-680 / CLIP 11262)</name>
    <dbReference type="NCBI Taxonomy" id="272626"/>
    <lineage>
        <taxon>Bacteria</taxon>
        <taxon>Bacillati</taxon>
        <taxon>Bacillota</taxon>
        <taxon>Bacilli</taxon>
        <taxon>Bacillales</taxon>
        <taxon>Listeriaceae</taxon>
        <taxon>Listeria</taxon>
    </lineage>
</organism>
<reference key="1">
    <citation type="journal article" date="2001" name="Science">
        <title>Comparative genomics of Listeria species.</title>
        <authorList>
            <person name="Glaser P."/>
            <person name="Frangeul L."/>
            <person name="Buchrieser C."/>
            <person name="Rusniok C."/>
            <person name="Amend A."/>
            <person name="Baquero F."/>
            <person name="Berche P."/>
            <person name="Bloecker H."/>
            <person name="Brandt P."/>
            <person name="Chakraborty T."/>
            <person name="Charbit A."/>
            <person name="Chetouani F."/>
            <person name="Couve E."/>
            <person name="de Daruvar A."/>
            <person name="Dehoux P."/>
            <person name="Domann E."/>
            <person name="Dominguez-Bernal G."/>
            <person name="Duchaud E."/>
            <person name="Durant L."/>
            <person name="Dussurget O."/>
            <person name="Entian K.-D."/>
            <person name="Fsihi H."/>
            <person name="Garcia-del Portillo F."/>
            <person name="Garrido P."/>
            <person name="Gautier L."/>
            <person name="Goebel W."/>
            <person name="Gomez-Lopez N."/>
            <person name="Hain T."/>
            <person name="Hauf J."/>
            <person name="Jackson D."/>
            <person name="Jones L.-M."/>
            <person name="Kaerst U."/>
            <person name="Kreft J."/>
            <person name="Kuhn M."/>
            <person name="Kunst F."/>
            <person name="Kurapkat G."/>
            <person name="Madueno E."/>
            <person name="Maitournam A."/>
            <person name="Mata Vicente J."/>
            <person name="Ng E."/>
            <person name="Nedjari H."/>
            <person name="Nordsiek G."/>
            <person name="Novella S."/>
            <person name="de Pablos B."/>
            <person name="Perez-Diaz J.-C."/>
            <person name="Purcell R."/>
            <person name="Remmel B."/>
            <person name="Rose M."/>
            <person name="Schlueter T."/>
            <person name="Simoes N."/>
            <person name="Tierrez A."/>
            <person name="Vazquez-Boland J.-A."/>
            <person name="Voss H."/>
            <person name="Wehland J."/>
            <person name="Cossart P."/>
        </authorList>
    </citation>
    <scope>NUCLEOTIDE SEQUENCE [LARGE SCALE GENOMIC DNA]</scope>
    <source>
        <strain>ATCC BAA-680 / CLIP 11262</strain>
    </source>
</reference>
<feature type="chain" id="PRO_0000216100" description="UPF0302 protein lin2035">
    <location>
        <begin position="1"/>
        <end position="181"/>
    </location>
</feature>
<proteinExistence type="inferred from homology"/>
<sequence>MKASISIDEKKDFIRWFLNKHQMKTREAMWVLNYIAGHDQIVKYVHFVDNLEGCARGLSLSAHGVESEPFLFFKGSIMTTDPEKAFHDIRLNWDEELYVELHFEEAMTSPEYALVREDNPFAAVKLAEEEKEMADALIYQSVHQFSREKLLQQIDEALDTRDEATFHKLVRILQQMDTEKE</sequence>